<sequence length="152" mass="14050">GLLGLGYGGYGGYGGYGGYGHGLALAAAPAAIAAPAVVAAPAIAHAPAVAVAPAVAHAPAAVSTVSQVSYGTTHYAPAVAKVAAIAAPVAVAAPAIAAAPAVGLGYGGYGHGLSLGYGHGLGLGYAAAPALSLGYGGYGHGLGYGGYGYGHH</sequence>
<reference key="1">
    <citation type="journal article" date="1995" name="Insect Biochem. Mol. Biol.">
        <title>Primary structure of proteins from the wing cuticle of the migratory locust, Locusta migratoria.</title>
        <authorList>
            <person name="Krogh T.N."/>
            <person name="Skou L."/>
            <person name="Roepstorff P."/>
            <person name="Andersen S.O."/>
            <person name="Hoejrup P."/>
        </authorList>
    </citation>
    <scope>PROTEIN SEQUENCE</scope>
    <scope>MASS SPECTROMETRY</scope>
    <source>
        <tissue>Wing</tissue>
    </source>
</reference>
<reference key="2">
    <citation type="journal article" date="1986" name="Eur. J. Biochem.">
        <title>Isolation, characterization, and N-terminal sequence studies of cuticular proteins from the migratory locust, Locusta migratoria.</title>
        <authorList>
            <person name="Hoejrup P."/>
            <person name="Andersen S.O."/>
            <person name="Roepstorff P."/>
        </authorList>
    </citation>
    <scope>PROTEIN SEQUENCE OF 1-59</scope>
</reference>
<keyword id="KW-0193">Cuticle</keyword>
<keyword id="KW-0903">Direct protein sequencing</keyword>
<keyword id="KW-0677">Repeat</keyword>
<protein>
    <recommendedName>
        <fullName>Cuticle protein 64</fullName>
    </recommendedName>
    <alternativeName>
        <fullName>LM-ACP 64</fullName>
        <shortName>LM-64</shortName>
    </alternativeName>
</protein>
<feature type="chain" id="PRO_0000196108" description="Cuticle protein 64">
    <location>
        <begin position="1"/>
        <end position="152"/>
    </location>
</feature>
<feature type="repeat" description="1">
    <location>
        <begin position="27"/>
        <end position="30"/>
    </location>
</feature>
<feature type="repeat" description="2">
    <location>
        <begin position="33"/>
        <end position="37"/>
    </location>
</feature>
<feature type="repeat" description="3">
    <location>
        <begin position="39"/>
        <end position="42"/>
    </location>
</feature>
<feature type="repeat" description="4">
    <location>
        <begin position="86"/>
        <end position="89"/>
    </location>
</feature>
<feature type="repeat" description="5">
    <location>
        <begin position="92"/>
        <end position="95"/>
    </location>
</feature>
<feature type="repeat" description="6">
    <location>
        <begin position="98"/>
        <end position="101"/>
    </location>
</feature>
<feature type="repeat" description="7">
    <location>
        <begin position="127"/>
        <end position="130"/>
    </location>
</feature>
<feature type="sequence conflict" description="In Ref. 2; AA sequence." evidence="2" ref="2">
    <original>G</original>
    <variation>S</variation>
    <location>
        <position position="11"/>
    </location>
</feature>
<feature type="sequence conflict" description="In Ref. 2; AA sequence." evidence="2" ref="2">
    <original>HG</original>
    <variation>PH</variation>
    <location>
        <begin position="21"/>
        <end position="22"/>
    </location>
</feature>
<feature type="sequence conflict" description="In Ref. 2; AA sequence." evidence="2" ref="2">
    <original>A</original>
    <variation>Y</variation>
    <location>
        <position position="27"/>
    </location>
</feature>
<feature type="sequence conflict" description="In Ref. 2; AA sequence." evidence="2" ref="2">
    <original>AAI</original>
    <variation>LAL</variation>
    <location>
        <begin position="30"/>
        <end position="32"/>
    </location>
</feature>
<feature type="sequence conflict" description="In Ref. 2; AA sequence." evidence="2" ref="2">
    <original>A</original>
    <variation>Y</variation>
    <location>
        <position position="34"/>
    </location>
</feature>
<feature type="sequence conflict" description="In Ref. 2; AA sequence." evidence="2" ref="2">
    <original>H</original>
    <variation>Q</variation>
    <location>
        <position position="45"/>
    </location>
</feature>
<comment type="function">
    <text>Component of the cuticle of migratory locust which contains more than 100 different structural proteins.</text>
</comment>
<comment type="domain">
    <text>The tetrapeptide (A-A-P-[AV]) repeats found throughout the protein are also present in many proteins constituting the protective envelope of other species.</text>
</comment>
<comment type="mass spectrometry" mass="14050.8" method="Electrospray" evidence="1"/>
<evidence type="ECO:0000269" key="1">
    <source>
    </source>
</evidence>
<evidence type="ECO:0000305" key="2"/>
<organism>
    <name type="scientific">Locusta migratoria</name>
    <name type="common">Migratory locust</name>
    <dbReference type="NCBI Taxonomy" id="7004"/>
    <lineage>
        <taxon>Eukaryota</taxon>
        <taxon>Metazoa</taxon>
        <taxon>Ecdysozoa</taxon>
        <taxon>Arthropoda</taxon>
        <taxon>Hexapoda</taxon>
        <taxon>Insecta</taxon>
        <taxon>Pterygota</taxon>
        <taxon>Neoptera</taxon>
        <taxon>Polyneoptera</taxon>
        <taxon>Orthoptera</taxon>
        <taxon>Caelifera</taxon>
        <taxon>Acrididea</taxon>
        <taxon>Acridomorpha</taxon>
        <taxon>Acridoidea</taxon>
        <taxon>Acrididae</taxon>
        <taxon>Oedipodinae</taxon>
        <taxon>Locusta</taxon>
    </lineage>
</organism>
<name>CU64_LOCMI</name>
<proteinExistence type="evidence at protein level"/>
<dbReference type="GO" id="GO:0042302">
    <property type="term" value="F:structural constituent of cuticle"/>
    <property type="evidence" value="ECO:0007669"/>
    <property type="project" value="UniProtKB-KW"/>
</dbReference>
<accession>P11739</accession>